<evidence type="ECO:0000255" key="1"/>
<evidence type="ECO:0000256" key="2">
    <source>
        <dbReference type="SAM" id="MobiDB-lite"/>
    </source>
</evidence>
<evidence type="ECO:0000305" key="3"/>
<organismHost>
    <name type="scientific">Vitis vinifera</name>
    <name type="common">Grape</name>
    <dbReference type="NCBI Taxonomy" id="29760"/>
</organismHost>
<sequence length="309" mass="31481">MTSRAPSPPTPPCPSPPALKSSPSPVPTATPASPPLKPLSNPLPPPPPTPRPSTSAGPSTPLPPPALRSSPSSALNASRGAPSTSPPPSSSPPSSPASTPPSRTPSPTPTAPASPVASTAMTPASPSVPPPPSAAPSSSAALSSAPPPSTAPLPRHEPRPPPPLPPPLQPPPGVRVPRSVAFPLPLARELPPLRLPPAPYLHPLLARLAPLRLRPPPDLPSPPLSPPLSPPLSPISPLHAPAPPPHPDPVLLPALSLAISRAAPDLLRLLSLLSPPSLFLLFTLLSIHFSPFPIFILLSLLLLLQFPRT</sequence>
<protein>
    <recommendedName>
        <fullName>Uncharacterized protein ORF3</fullName>
    </recommendedName>
</protein>
<proteinExistence type="predicted"/>
<accession>Q8UZB4</accession>
<dbReference type="EMBL" id="AJ309022">
    <property type="protein sequence ID" value="CAC84402.1"/>
    <property type="molecule type" value="Genomic_RNA"/>
</dbReference>
<dbReference type="RefSeq" id="NP_542614.1">
    <property type="nucleotide sequence ID" value="NC_003347.1"/>
</dbReference>
<dbReference type="SMR" id="Q8UZB4"/>
<dbReference type="KEGG" id="vg:1732621"/>
<dbReference type="Proteomes" id="UP000000399">
    <property type="component" value="Segment"/>
</dbReference>
<dbReference type="GO" id="GO:0033644">
    <property type="term" value="C:host cell membrane"/>
    <property type="evidence" value="ECO:0007669"/>
    <property type="project" value="UniProtKB-SubCell"/>
</dbReference>
<dbReference type="GO" id="GO:0016020">
    <property type="term" value="C:membrane"/>
    <property type="evidence" value="ECO:0007669"/>
    <property type="project" value="UniProtKB-KW"/>
</dbReference>
<organism>
    <name type="scientific">Grapevine fleck virus (isolate Italy/MT48)</name>
    <name type="common">GFkV</name>
    <dbReference type="NCBI Taxonomy" id="652668"/>
    <lineage>
        <taxon>Viruses</taxon>
        <taxon>Riboviria</taxon>
        <taxon>Orthornavirae</taxon>
        <taxon>Kitrinoviricota</taxon>
        <taxon>Alsuviricetes</taxon>
        <taxon>Tymovirales</taxon>
        <taxon>Tymoviridae</taxon>
        <taxon>Maculavirus</taxon>
        <taxon>Maculavirus vitis</taxon>
    </lineage>
</organism>
<comment type="subcellular location">
    <subcellularLocation>
        <location evidence="3">Host membrane</location>
        <topology evidence="3">Single-pass membrane protein</topology>
    </subcellularLocation>
</comment>
<keyword id="KW-1043">Host membrane</keyword>
<keyword id="KW-0472">Membrane</keyword>
<keyword id="KW-1185">Reference proteome</keyword>
<keyword id="KW-0812">Transmembrane</keyword>
<keyword id="KW-1133">Transmembrane helix</keyword>
<feature type="chain" id="PRO_0000402504" description="Uncharacterized protein ORF3">
    <location>
        <begin position="1"/>
        <end position="309"/>
    </location>
</feature>
<feature type="transmembrane region" description="Helical" evidence="1">
    <location>
        <begin position="278"/>
        <end position="298"/>
    </location>
</feature>
<feature type="region of interest" description="Disordered" evidence="2">
    <location>
        <begin position="1"/>
        <end position="174"/>
    </location>
</feature>
<feature type="region of interest" description="Disordered" evidence="2">
    <location>
        <begin position="216"/>
        <end position="240"/>
    </location>
</feature>
<feature type="compositionally biased region" description="Pro residues" evidence="2">
    <location>
        <begin position="1"/>
        <end position="17"/>
    </location>
</feature>
<feature type="compositionally biased region" description="Pro residues" evidence="2">
    <location>
        <begin position="24"/>
        <end position="51"/>
    </location>
</feature>
<feature type="compositionally biased region" description="Low complexity" evidence="2">
    <location>
        <begin position="67"/>
        <end position="83"/>
    </location>
</feature>
<feature type="compositionally biased region" description="Pro residues" evidence="2">
    <location>
        <begin position="84"/>
        <end position="112"/>
    </location>
</feature>
<feature type="compositionally biased region" description="Low complexity" evidence="2">
    <location>
        <begin position="113"/>
        <end position="125"/>
    </location>
</feature>
<feature type="compositionally biased region" description="Low complexity" evidence="2">
    <location>
        <begin position="135"/>
        <end position="144"/>
    </location>
</feature>
<feature type="compositionally biased region" description="Pro residues" evidence="2">
    <location>
        <begin position="160"/>
        <end position="174"/>
    </location>
</feature>
<reference key="1">
    <citation type="journal article" date="2001" name="J. Gen. Virol.">
        <title>Complete nucleotide sequence and genome organization of Grapevine fleck virus.</title>
        <authorList>
            <person name="Sabanadzovic S."/>
            <person name="Ghanem-Sabanadzovic N.A."/>
            <person name="Saldarelli P."/>
            <person name="Martelli G.P."/>
        </authorList>
    </citation>
    <scope>NUCLEOTIDE SEQUENCE [GENOMIC RNA]</scope>
</reference>
<name>ORF3_GFKVM</name>
<gene>
    <name type="ORF">ORF3</name>
</gene>